<name>CBPG_PSES6</name>
<sequence length="415" mass="43932">MRPSIHRTAIAAVLATAFVAGTALAQKRDNVLFQAATDEQPAVIKTLEKLVNIETGTGDAEGIAAAGNFLEAELKNLGFTVTRSKSAGLVVGDNIVGKIKGRGGKNLLLMSHMDTVYLKGILAKAPFRVEGDKAYGPGIADDKGGNAVILHTLKLLKEYGVRDYGTITVLFNTDEEKGSFGSRDLIQEEAKLADYVLSFEPTSAGDEKLSLGTSGIAYVQVNITGKASHAGAAPELGVNALVEASDLVLRTMNIDDKAKNLRFNWTIAKAGNVSNIIPASATLNADVRYARNEDFDAAMKTLEERAQQKKLPEADVKVIVTRGRPAFNAGEGGKKLVDKAVAYYKEAGGTLGVEERTGGGTDAAYAALSGKPVIESLGLPGFGYHSDKAEYVDISAIPRRLYMAARLIMDLGAGK</sequence>
<proteinExistence type="evidence at protein level"/>
<dbReference type="EC" id="3.4.17.11"/>
<dbReference type="EMBL" id="M12599">
    <property type="protein sequence ID" value="AAA62842.1"/>
    <property type="molecule type" value="Genomic_DNA"/>
</dbReference>
<dbReference type="PIR" id="A24955">
    <property type="entry name" value="YXPSF2"/>
</dbReference>
<dbReference type="PDB" id="1CG2">
    <property type="method" value="X-ray"/>
    <property type="resolution" value="2.50 A"/>
    <property type="chains" value="A/B/C/D=23-415"/>
</dbReference>
<dbReference type="PDB" id="6XJ5">
    <property type="method" value="X-ray"/>
    <property type="resolution" value="3.11 A"/>
    <property type="chains" value="A/B/C/D/E/F/G/H=24-415"/>
</dbReference>
<dbReference type="PDB" id="7M6U">
    <property type="method" value="X-ray"/>
    <property type="resolution" value="2.59 A"/>
    <property type="chains" value="A/B/C/D=25-415"/>
</dbReference>
<dbReference type="PDBsum" id="1CG2"/>
<dbReference type="PDBsum" id="6XJ5"/>
<dbReference type="PDBsum" id="7M6U"/>
<dbReference type="SASBDB" id="P06621"/>
<dbReference type="SMR" id="P06621"/>
<dbReference type="DrugBank" id="DB00563">
    <property type="generic name" value="Methotrexate"/>
</dbReference>
<dbReference type="MEROPS" id="M20.001"/>
<dbReference type="BRENDA" id="3.4.17.11">
    <property type="organism ID" value="5085"/>
</dbReference>
<dbReference type="SABIO-RK" id="P06621"/>
<dbReference type="EvolutionaryTrace" id="P06621"/>
<dbReference type="GO" id="GO:0004180">
    <property type="term" value="F:carboxypeptidase activity"/>
    <property type="evidence" value="ECO:0007669"/>
    <property type="project" value="UniProtKB-KW"/>
</dbReference>
<dbReference type="GO" id="GO:0046872">
    <property type="term" value="F:metal ion binding"/>
    <property type="evidence" value="ECO:0007669"/>
    <property type="project" value="UniProtKB-KW"/>
</dbReference>
<dbReference type="GO" id="GO:0008237">
    <property type="term" value="F:metallopeptidase activity"/>
    <property type="evidence" value="ECO:0007669"/>
    <property type="project" value="UniProtKB-KW"/>
</dbReference>
<dbReference type="GO" id="GO:0006508">
    <property type="term" value="P:proteolysis"/>
    <property type="evidence" value="ECO:0007669"/>
    <property type="project" value="UniProtKB-KW"/>
</dbReference>
<dbReference type="CDD" id="cd03885">
    <property type="entry name" value="M20_CPDG2"/>
    <property type="match status" value="1"/>
</dbReference>
<dbReference type="Gene3D" id="3.30.70.360">
    <property type="match status" value="1"/>
</dbReference>
<dbReference type="Gene3D" id="3.40.630.10">
    <property type="entry name" value="Zn peptidases"/>
    <property type="match status" value="1"/>
</dbReference>
<dbReference type="InterPro" id="IPR001261">
    <property type="entry name" value="ArgE/DapE_CS"/>
</dbReference>
<dbReference type="InterPro" id="IPR036264">
    <property type="entry name" value="Bact_exopeptidase_dim_dom"/>
</dbReference>
<dbReference type="InterPro" id="IPR017150">
    <property type="entry name" value="Pept_M20_glutamate_carboxypep"/>
</dbReference>
<dbReference type="InterPro" id="IPR002933">
    <property type="entry name" value="Peptidase_M20"/>
</dbReference>
<dbReference type="InterPro" id="IPR011650">
    <property type="entry name" value="Peptidase_M20_dimer"/>
</dbReference>
<dbReference type="InterPro" id="IPR050072">
    <property type="entry name" value="Peptidase_M20A"/>
</dbReference>
<dbReference type="NCBIfam" id="NF004788">
    <property type="entry name" value="PRK06133.1"/>
    <property type="match status" value="1"/>
</dbReference>
<dbReference type="PANTHER" id="PTHR43808">
    <property type="entry name" value="ACETYLORNITHINE DEACETYLASE"/>
    <property type="match status" value="1"/>
</dbReference>
<dbReference type="PANTHER" id="PTHR43808:SF10">
    <property type="entry name" value="BLL3749 PROTEIN"/>
    <property type="match status" value="1"/>
</dbReference>
<dbReference type="Pfam" id="PF07687">
    <property type="entry name" value="M20_dimer"/>
    <property type="match status" value="1"/>
</dbReference>
<dbReference type="Pfam" id="PF01546">
    <property type="entry name" value="Peptidase_M20"/>
    <property type="match status" value="1"/>
</dbReference>
<dbReference type="PIRSF" id="PIRSF037238">
    <property type="entry name" value="Carboxypeptidase_G2"/>
    <property type="match status" value="1"/>
</dbReference>
<dbReference type="SUPFAM" id="SSF55031">
    <property type="entry name" value="Bacterial exopeptidase dimerisation domain"/>
    <property type="match status" value="1"/>
</dbReference>
<dbReference type="SUPFAM" id="SSF53187">
    <property type="entry name" value="Zn-dependent exopeptidases"/>
    <property type="match status" value="1"/>
</dbReference>
<dbReference type="PROSITE" id="PS00758">
    <property type="entry name" value="ARGE_DAPE_CPG2_1"/>
    <property type="match status" value="1"/>
</dbReference>
<dbReference type="PROSITE" id="PS00759">
    <property type="entry name" value="ARGE_DAPE_CPG2_2"/>
    <property type="match status" value="1"/>
</dbReference>
<keyword id="KW-0002">3D-structure</keyword>
<keyword id="KW-0121">Carboxypeptidase</keyword>
<keyword id="KW-0903">Direct protein sequencing</keyword>
<keyword id="KW-0378">Hydrolase</keyword>
<keyword id="KW-0479">Metal-binding</keyword>
<keyword id="KW-0482">Metalloprotease</keyword>
<keyword id="KW-0582">Pharmaceutical</keyword>
<keyword id="KW-0645">Protease</keyword>
<keyword id="KW-0732">Signal</keyword>
<keyword id="KW-0862">Zinc</keyword>
<protein>
    <recommendedName>
        <fullName>Carboxypeptidase G2</fullName>
        <shortName>CPDG2</shortName>
        <ecNumber>3.4.17.11</ecNumber>
    </recommendedName>
    <alternativeName>
        <fullName>Folate hydrolase G2</fullName>
    </alternativeName>
    <alternativeName>
        <fullName>Glutamate carboxypeptidase</fullName>
    </alternativeName>
    <alternativeName>
        <fullName>Pteroylmonoglutamic acid hydrolase G2</fullName>
    </alternativeName>
    <innName>Glucarpidase</innName>
</protein>
<comment type="function">
    <text>Catalyzes the hydrolysis of reduced and non-reduced folates to pteroates and L-glutamate. This enzyme has a broad specificity.</text>
</comment>
<comment type="catalytic activity">
    <reaction>
        <text>Release of C-terminal glutamate residues from a wide range of N-acylating moieties, including peptidyl, aminoacyl, benzoyl, benzyloxycarbonyl, folyl and pteroyl groups.</text>
        <dbReference type="EC" id="3.4.17.11"/>
    </reaction>
</comment>
<comment type="cofactor">
    <cofactor evidence="2">
        <name>Zn(2+)</name>
        <dbReference type="ChEBI" id="CHEBI:29105"/>
    </cofactor>
    <text evidence="2">Binds 2 Zn(2+) ions per subunit.</text>
</comment>
<comment type="subunit">
    <text evidence="2">Homodimer.</text>
</comment>
<comment type="pharmaceutical">
    <text>Used clinically as a folate-depleting, antitumor agent.</text>
</comment>
<comment type="similarity">
    <text evidence="3">Belongs to the peptidase M20A family.</text>
</comment>
<accession>P06621</accession>
<feature type="signal peptide">
    <location>
        <begin position="1"/>
        <end position="22"/>
    </location>
</feature>
<feature type="chain" id="PRO_0000026808" description="Carboxypeptidase G2">
    <location>
        <begin position="23"/>
        <end position="415"/>
    </location>
</feature>
<feature type="active site" evidence="1">
    <location>
        <position position="114"/>
    </location>
</feature>
<feature type="active site" description="Proton acceptor" evidence="2">
    <location>
        <position position="175"/>
    </location>
</feature>
<feature type="binding site" evidence="2">
    <location>
        <position position="112"/>
    </location>
    <ligand>
        <name>Zn(2+)</name>
        <dbReference type="ChEBI" id="CHEBI:29105"/>
        <label>2</label>
    </ligand>
</feature>
<feature type="binding site" evidence="2">
    <location>
        <position position="141"/>
    </location>
    <ligand>
        <name>Zn(2+)</name>
        <dbReference type="ChEBI" id="CHEBI:29105"/>
        <label>1</label>
    </ligand>
</feature>
<feature type="binding site" evidence="2">
    <location>
        <position position="141"/>
    </location>
    <ligand>
        <name>Zn(2+)</name>
        <dbReference type="ChEBI" id="CHEBI:29105"/>
        <label>2</label>
    </ligand>
</feature>
<feature type="binding site" evidence="2">
    <location>
        <position position="176"/>
    </location>
    <ligand>
        <name>Zn(2+)</name>
        <dbReference type="ChEBI" id="CHEBI:29105"/>
        <label>1</label>
    </ligand>
</feature>
<feature type="binding site" evidence="2">
    <location>
        <position position="200"/>
    </location>
    <ligand>
        <name>Zn(2+)</name>
        <dbReference type="ChEBI" id="CHEBI:29105"/>
        <label>2</label>
    </ligand>
</feature>
<feature type="binding site" evidence="2">
    <location>
        <position position="385"/>
    </location>
    <ligand>
        <name>Zn(2+)</name>
        <dbReference type="ChEBI" id="CHEBI:29105"/>
        <label>1</label>
    </ligand>
</feature>
<feature type="helix" evidence="4">
    <location>
        <begin position="30"/>
        <end position="51"/>
    </location>
</feature>
<feature type="helix" evidence="4">
    <location>
        <begin position="60"/>
        <end position="76"/>
    </location>
</feature>
<feature type="strand" evidence="4">
    <location>
        <begin position="80"/>
        <end position="85"/>
    </location>
</feature>
<feature type="strand" evidence="4">
    <location>
        <begin position="92"/>
        <end position="100"/>
    </location>
</feature>
<feature type="strand" evidence="4">
    <location>
        <begin position="107"/>
        <end position="112"/>
    </location>
</feature>
<feature type="helix" evidence="4">
    <location>
        <begin position="121"/>
        <end position="124"/>
    </location>
</feature>
<feature type="strand" evidence="4">
    <location>
        <begin position="128"/>
        <end position="130"/>
    </location>
</feature>
<feature type="strand" evidence="4">
    <location>
        <begin position="133"/>
        <end position="135"/>
    </location>
</feature>
<feature type="turn" evidence="4">
    <location>
        <begin position="137"/>
        <end position="142"/>
    </location>
</feature>
<feature type="helix" evidence="4">
    <location>
        <begin position="143"/>
        <end position="158"/>
    </location>
</feature>
<feature type="strand" evidence="4">
    <location>
        <begin position="164"/>
        <end position="173"/>
    </location>
</feature>
<feature type="helix" evidence="4">
    <location>
        <begin position="175"/>
        <end position="177"/>
    </location>
</feature>
<feature type="turn" evidence="4">
    <location>
        <begin position="178"/>
        <end position="182"/>
    </location>
</feature>
<feature type="helix" evidence="4">
    <location>
        <begin position="183"/>
        <end position="192"/>
    </location>
</feature>
<feature type="strand" evidence="4">
    <location>
        <begin position="194"/>
        <end position="198"/>
    </location>
</feature>
<feature type="strand" evidence="4">
    <location>
        <begin position="208"/>
        <end position="213"/>
    </location>
</feature>
<feature type="strand" evidence="4">
    <location>
        <begin position="215"/>
        <end position="224"/>
    </location>
</feature>
<feature type="strand" evidence="5">
    <location>
        <begin position="230"/>
        <end position="232"/>
    </location>
</feature>
<feature type="helix" evidence="4">
    <location>
        <begin position="234"/>
        <end position="236"/>
    </location>
</feature>
<feature type="helix" evidence="4">
    <location>
        <begin position="240"/>
        <end position="251"/>
    </location>
</feature>
<feature type="helix" evidence="4">
    <location>
        <begin position="252"/>
        <end position="254"/>
    </location>
</feature>
<feature type="turn" evidence="4">
    <location>
        <begin position="257"/>
        <end position="260"/>
    </location>
</feature>
<feature type="strand" evidence="4">
    <location>
        <begin position="261"/>
        <end position="270"/>
    </location>
</feature>
<feature type="strand" evidence="4">
    <location>
        <begin position="279"/>
        <end position="291"/>
    </location>
</feature>
<feature type="helix" evidence="4">
    <location>
        <begin position="292"/>
        <end position="306"/>
    </location>
</feature>
<feature type="strand" evidence="4">
    <location>
        <begin position="315"/>
        <end position="322"/>
    </location>
</feature>
<feature type="helix" evidence="4">
    <location>
        <begin position="330"/>
        <end position="346"/>
    </location>
</feature>
<feature type="strand" evidence="4">
    <location>
        <begin position="352"/>
        <end position="355"/>
    </location>
</feature>
<feature type="strand" evidence="5">
    <location>
        <begin position="356"/>
        <end position="358"/>
    </location>
</feature>
<feature type="helix" evidence="4">
    <location>
        <begin position="363"/>
        <end position="366"/>
    </location>
</feature>
<feature type="helix" evidence="4">
    <location>
        <begin position="367"/>
        <end position="369"/>
    </location>
</feature>
<feature type="strand" evidence="4">
    <location>
        <begin position="380"/>
        <end position="382"/>
    </location>
</feature>
<feature type="strand" evidence="4">
    <location>
        <begin position="386"/>
        <end position="388"/>
    </location>
</feature>
<feature type="strand" evidence="4">
    <location>
        <begin position="391"/>
        <end position="393"/>
    </location>
</feature>
<feature type="helix" evidence="4">
    <location>
        <begin position="394"/>
        <end position="396"/>
    </location>
</feature>
<feature type="helix" evidence="4">
    <location>
        <begin position="397"/>
        <end position="412"/>
    </location>
</feature>
<organism>
    <name type="scientific">Pseudomonas sp. (strain RS-16)</name>
    <dbReference type="NCBI Taxonomy" id="312"/>
    <lineage>
        <taxon>Bacteria</taxon>
        <taxon>Pseudomonadati</taxon>
        <taxon>Pseudomonadota</taxon>
    </lineage>
</organism>
<evidence type="ECO:0000250" key="1"/>
<evidence type="ECO:0000269" key="2">
    <source>
    </source>
</evidence>
<evidence type="ECO:0000305" key="3"/>
<evidence type="ECO:0007829" key="4">
    <source>
        <dbReference type="PDB" id="1CG2"/>
    </source>
</evidence>
<evidence type="ECO:0007829" key="5">
    <source>
        <dbReference type="PDB" id="6XJ5"/>
    </source>
</evidence>
<reference key="1">
    <citation type="journal article" date="1984" name="Gene">
        <title>The complete nucleotide sequence of the Pseudomonas gene coding for carboxypeptidase G2.</title>
        <authorList>
            <person name="Minton N.P."/>
            <person name="Atkinson T."/>
            <person name="Bruton C.J."/>
            <person name="Sherwood R.F."/>
        </authorList>
    </citation>
    <scope>NUCLEOTIDE SEQUENCE [GENOMIC DNA]</scope>
    <scope>PARTIAL PROTEIN SEQUENCE</scope>
</reference>
<reference key="2">
    <citation type="journal article" date="1986" name="Gene">
        <authorList>
            <person name="Minton N.P."/>
            <person name="Atkinson T."/>
            <person name="Bruton C.J."/>
            <person name="Sherwood R.F."/>
        </authorList>
    </citation>
    <scope>ERRATUM OF PUBMED:6396165</scope>
</reference>
<reference key="3">
    <citation type="journal article" date="1985" name="Eur. J. Biochem.">
        <title>Purification and properties of carboxypeptidase G2 from Pseudomonas sp. strain RS-16. Use of a novel triazine dye affinity method.</title>
        <authorList>
            <person name="Sherwood R.F."/>
            <person name="Melton R.G."/>
            <person name="Alwan S.M."/>
            <person name="Hughes P."/>
        </authorList>
    </citation>
    <scope>CHARACTERIZATION</scope>
</reference>
<reference key="4">
    <citation type="journal article" date="1997" name="Structure">
        <title>Crystal structure of carboxypeptidase G2, a bacterial enzyme with applications in cancer therapy.</title>
        <authorList>
            <person name="Rowsell S."/>
            <person name="Pauptit R.A."/>
            <person name="Tucker A.D."/>
            <person name="Melton R.G."/>
            <person name="Blow D.M."/>
            <person name="Brick P."/>
        </authorList>
    </citation>
    <scope>X-RAY CRYSTALLOGRAPHY (2.5 ANGSTROMS) OF 23-415 IN COMPLEX WITH ZINC</scope>
    <scope>COFACTOR</scope>
    <scope>ACTIVE SITE</scope>
</reference>
<gene>
    <name type="primary">cpg2</name>
</gene>